<protein>
    <recommendedName>
        <fullName>Putative inactivation escape 1 protein</fullName>
    </recommendedName>
</protein>
<organism>
    <name type="scientific">Homo sapiens</name>
    <name type="common">Human</name>
    <dbReference type="NCBI Taxonomy" id="9606"/>
    <lineage>
        <taxon>Eukaryota</taxon>
        <taxon>Metazoa</taxon>
        <taxon>Chordata</taxon>
        <taxon>Craniata</taxon>
        <taxon>Vertebrata</taxon>
        <taxon>Euteleostomi</taxon>
        <taxon>Mammalia</taxon>
        <taxon>Eutheria</taxon>
        <taxon>Euarchontoglires</taxon>
        <taxon>Primates</taxon>
        <taxon>Haplorrhini</taxon>
        <taxon>Catarrhini</taxon>
        <taxon>Hominidae</taxon>
        <taxon>Homo</taxon>
    </lineage>
</organism>
<keyword id="KW-1185">Reference proteome</keyword>
<gene>
    <name type="primary">INE1</name>
    <name type="synonym">DXS6974E</name>
</gene>
<proteinExistence type="uncertain"/>
<evidence type="ECO:0000269" key="1">
    <source>
    </source>
</evidence>
<evidence type="ECO:0000305" key="2"/>
<feature type="chain" id="PRO_0000084205" description="Putative inactivation escape 1 protein">
    <location>
        <begin position="1"/>
        <end position="51"/>
    </location>
</feature>
<feature type="sequence conflict" description="In Ref. 1; CAA71702." evidence="2" ref="1">
    <original>S</original>
    <variation>F</variation>
    <location>
        <position position="6"/>
    </location>
</feature>
<dbReference type="EMBL" id="Y10696">
    <property type="protein sequence ID" value="CAA71702.2"/>
    <property type="molecule type" value="mRNA"/>
</dbReference>
<dbReference type="EMBL" id="AL513366">
    <property type="status" value="NOT_ANNOTATED_CDS"/>
    <property type="molecule type" value="Genomic_DNA"/>
</dbReference>
<dbReference type="EMBL" id="BC069772">
    <property type="status" value="NOT_ANNOTATED_CDS"/>
    <property type="molecule type" value="mRNA"/>
</dbReference>
<dbReference type="BioMuta" id="HGNC:6060"/>
<dbReference type="AGR" id="HGNC:6060"/>
<dbReference type="GeneCards" id="INE1"/>
<dbReference type="HGNC" id="HGNC:6060">
    <property type="gene designation" value="INE1"/>
</dbReference>
<dbReference type="MIM" id="300164">
    <property type="type" value="gene"/>
</dbReference>
<dbReference type="neXtProt" id="NX_O15225"/>
<dbReference type="InParanoid" id="O15225"/>
<dbReference type="PAN-GO" id="O15225">
    <property type="GO annotations" value="0 GO annotations based on evolutionary models"/>
</dbReference>
<dbReference type="Pharos" id="O15225">
    <property type="development level" value="Tdark"/>
</dbReference>
<dbReference type="Proteomes" id="UP000005640">
    <property type="component" value="Unplaced"/>
</dbReference>
<dbReference type="RNAct" id="O15225">
    <property type="molecule type" value="protein"/>
</dbReference>
<accession>O15225</accession>
<accession>Q5JRR7</accession>
<accession>Q6NSX0</accession>
<sequence length="51" mass="5365">MSGPLSPVCSCPQLPFMLSPCHMHHHPGHVALSQTVSPASLLTQGLGLPQH</sequence>
<name>INE1_HUMAN</name>
<comment type="tissue specificity">
    <text evidence="1">Highly expressed in pancreas, heart and liver followed by brain, placenta, lung, skeletal muscle and kidney. Mostly expressed in females.</text>
</comment>
<comment type="caution">
    <text evidence="2">Product of a dubious gene prediction. Encoded in intron of UBA1.</text>
</comment>
<reference key="1">
    <citation type="journal article" date="1997" name="Genomics">
        <title>Escape from X inactivation of two new genes associated with DXS6974E and DXS7020E.</title>
        <authorList>
            <person name="Esposito T."/>
            <person name="Gianfrancesco F."/>
            <person name="Ciccodicola A."/>
            <person name="D'Esposito M."/>
            <person name="Nagaraja R."/>
            <person name="Mazzarella R."/>
            <person name="D'Urso M."/>
            <person name="Forabosco A."/>
        </authorList>
    </citation>
    <scope>NUCLEOTIDE SEQUENCE [MRNA]</scope>
    <scope>TISSUE SPECIFICITY</scope>
</reference>
<reference key="2">
    <citation type="submission" date="1999-03" db="EMBL/GenBank/DDBJ databases">
        <authorList>
            <person name="Forabosco A."/>
        </authorList>
    </citation>
    <scope>SEQUENCE REVISION</scope>
</reference>
<reference key="3">
    <citation type="journal article" date="2005" name="Nature">
        <title>The DNA sequence of the human X chromosome.</title>
        <authorList>
            <person name="Ross M.T."/>
            <person name="Grafham D.V."/>
            <person name="Coffey A.J."/>
            <person name="Scherer S."/>
            <person name="McLay K."/>
            <person name="Muzny D."/>
            <person name="Platzer M."/>
            <person name="Howell G.R."/>
            <person name="Burrows C."/>
            <person name="Bird C.P."/>
            <person name="Frankish A."/>
            <person name="Lovell F.L."/>
            <person name="Howe K.L."/>
            <person name="Ashurst J.L."/>
            <person name="Fulton R.S."/>
            <person name="Sudbrak R."/>
            <person name="Wen G."/>
            <person name="Jones M.C."/>
            <person name="Hurles M.E."/>
            <person name="Andrews T.D."/>
            <person name="Scott C.E."/>
            <person name="Searle S."/>
            <person name="Ramser J."/>
            <person name="Whittaker A."/>
            <person name="Deadman R."/>
            <person name="Carter N.P."/>
            <person name="Hunt S.E."/>
            <person name="Chen R."/>
            <person name="Cree A."/>
            <person name="Gunaratne P."/>
            <person name="Havlak P."/>
            <person name="Hodgson A."/>
            <person name="Metzker M.L."/>
            <person name="Richards S."/>
            <person name="Scott G."/>
            <person name="Steffen D."/>
            <person name="Sodergren E."/>
            <person name="Wheeler D.A."/>
            <person name="Worley K.C."/>
            <person name="Ainscough R."/>
            <person name="Ambrose K.D."/>
            <person name="Ansari-Lari M.A."/>
            <person name="Aradhya S."/>
            <person name="Ashwell R.I."/>
            <person name="Babbage A.K."/>
            <person name="Bagguley C.L."/>
            <person name="Ballabio A."/>
            <person name="Banerjee R."/>
            <person name="Barker G.E."/>
            <person name="Barlow K.F."/>
            <person name="Barrett I.P."/>
            <person name="Bates K.N."/>
            <person name="Beare D.M."/>
            <person name="Beasley H."/>
            <person name="Beasley O."/>
            <person name="Beck A."/>
            <person name="Bethel G."/>
            <person name="Blechschmidt K."/>
            <person name="Brady N."/>
            <person name="Bray-Allen S."/>
            <person name="Bridgeman A.M."/>
            <person name="Brown A.J."/>
            <person name="Brown M.J."/>
            <person name="Bonnin D."/>
            <person name="Bruford E.A."/>
            <person name="Buhay C."/>
            <person name="Burch P."/>
            <person name="Burford D."/>
            <person name="Burgess J."/>
            <person name="Burrill W."/>
            <person name="Burton J."/>
            <person name="Bye J.M."/>
            <person name="Carder C."/>
            <person name="Carrel L."/>
            <person name="Chako J."/>
            <person name="Chapman J.C."/>
            <person name="Chavez D."/>
            <person name="Chen E."/>
            <person name="Chen G."/>
            <person name="Chen Y."/>
            <person name="Chen Z."/>
            <person name="Chinault C."/>
            <person name="Ciccodicola A."/>
            <person name="Clark S.Y."/>
            <person name="Clarke G."/>
            <person name="Clee C.M."/>
            <person name="Clegg S."/>
            <person name="Clerc-Blankenburg K."/>
            <person name="Clifford K."/>
            <person name="Cobley V."/>
            <person name="Cole C.G."/>
            <person name="Conquer J.S."/>
            <person name="Corby N."/>
            <person name="Connor R.E."/>
            <person name="David R."/>
            <person name="Davies J."/>
            <person name="Davis C."/>
            <person name="Davis J."/>
            <person name="Delgado O."/>
            <person name="Deshazo D."/>
            <person name="Dhami P."/>
            <person name="Ding Y."/>
            <person name="Dinh H."/>
            <person name="Dodsworth S."/>
            <person name="Draper H."/>
            <person name="Dugan-Rocha S."/>
            <person name="Dunham A."/>
            <person name="Dunn M."/>
            <person name="Durbin K.J."/>
            <person name="Dutta I."/>
            <person name="Eades T."/>
            <person name="Ellwood M."/>
            <person name="Emery-Cohen A."/>
            <person name="Errington H."/>
            <person name="Evans K.L."/>
            <person name="Faulkner L."/>
            <person name="Francis F."/>
            <person name="Frankland J."/>
            <person name="Fraser A.E."/>
            <person name="Galgoczy P."/>
            <person name="Gilbert J."/>
            <person name="Gill R."/>
            <person name="Gloeckner G."/>
            <person name="Gregory S.G."/>
            <person name="Gribble S."/>
            <person name="Griffiths C."/>
            <person name="Grocock R."/>
            <person name="Gu Y."/>
            <person name="Gwilliam R."/>
            <person name="Hamilton C."/>
            <person name="Hart E.A."/>
            <person name="Hawes A."/>
            <person name="Heath P.D."/>
            <person name="Heitmann K."/>
            <person name="Hennig S."/>
            <person name="Hernandez J."/>
            <person name="Hinzmann B."/>
            <person name="Ho S."/>
            <person name="Hoffs M."/>
            <person name="Howden P.J."/>
            <person name="Huckle E.J."/>
            <person name="Hume J."/>
            <person name="Hunt P.J."/>
            <person name="Hunt A.R."/>
            <person name="Isherwood J."/>
            <person name="Jacob L."/>
            <person name="Johnson D."/>
            <person name="Jones S."/>
            <person name="de Jong P.J."/>
            <person name="Joseph S.S."/>
            <person name="Keenan S."/>
            <person name="Kelly S."/>
            <person name="Kershaw J.K."/>
            <person name="Khan Z."/>
            <person name="Kioschis P."/>
            <person name="Klages S."/>
            <person name="Knights A.J."/>
            <person name="Kosiura A."/>
            <person name="Kovar-Smith C."/>
            <person name="Laird G.K."/>
            <person name="Langford C."/>
            <person name="Lawlor S."/>
            <person name="Leversha M."/>
            <person name="Lewis L."/>
            <person name="Liu W."/>
            <person name="Lloyd C."/>
            <person name="Lloyd D.M."/>
            <person name="Loulseged H."/>
            <person name="Loveland J.E."/>
            <person name="Lovell J.D."/>
            <person name="Lozado R."/>
            <person name="Lu J."/>
            <person name="Lyne R."/>
            <person name="Ma J."/>
            <person name="Maheshwari M."/>
            <person name="Matthews L.H."/>
            <person name="McDowall J."/>
            <person name="McLaren S."/>
            <person name="McMurray A."/>
            <person name="Meidl P."/>
            <person name="Meitinger T."/>
            <person name="Milne S."/>
            <person name="Miner G."/>
            <person name="Mistry S.L."/>
            <person name="Morgan M."/>
            <person name="Morris S."/>
            <person name="Mueller I."/>
            <person name="Mullikin J.C."/>
            <person name="Nguyen N."/>
            <person name="Nordsiek G."/>
            <person name="Nyakatura G."/>
            <person name="O'dell C.N."/>
            <person name="Okwuonu G."/>
            <person name="Palmer S."/>
            <person name="Pandian R."/>
            <person name="Parker D."/>
            <person name="Parrish J."/>
            <person name="Pasternak S."/>
            <person name="Patel D."/>
            <person name="Pearce A.V."/>
            <person name="Pearson D.M."/>
            <person name="Pelan S.E."/>
            <person name="Perez L."/>
            <person name="Porter K.M."/>
            <person name="Ramsey Y."/>
            <person name="Reichwald K."/>
            <person name="Rhodes S."/>
            <person name="Ridler K.A."/>
            <person name="Schlessinger D."/>
            <person name="Schueler M.G."/>
            <person name="Sehra H.K."/>
            <person name="Shaw-Smith C."/>
            <person name="Shen H."/>
            <person name="Sheridan E.M."/>
            <person name="Shownkeen R."/>
            <person name="Skuce C.D."/>
            <person name="Smith M.L."/>
            <person name="Sotheran E.C."/>
            <person name="Steingruber H.E."/>
            <person name="Steward C.A."/>
            <person name="Storey R."/>
            <person name="Swann R.M."/>
            <person name="Swarbreck D."/>
            <person name="Tabor P.E."/>
            <person name="Taudien S."/>
            <person name="Taylor T."/>
            <person name="Teague B."/>
            <person name="Thomas K."/>
            <person name="Thorpe A."/>
            <person name="Timms K."/>
            <person name="Tracey A."/>
            <person name="Trevanion S."/>
            <person name="Tromans A.C."/>
            <person name="d'Urso M."/>
            <person name="Verduzco D."/>
            <person name="Villasana D."/>
            <person name="Waldron L."/>
            <person name="Wall M."/>
            <person name="Wang Q."/>
            <person name="Warren J."/>
            <person name="Warry G.L."/>
            <person name="Wei X."/>
            <person name="West A."/>
            <person name="Whitehead S.L."/>
            <person name="Whiteley M.N."/>
            <person name="Wilkinson J.E."/>
            <person name="Willey D.L."/>
            <person name="Williams G."/>
            <person name="Williams L."/>
            <person name="Williamson A."/>
            <person name="Williamson H."/>
            <person name="Wilming L."/>
            <person name="Woodmansey R.L."/>
            <person name="Wray P.W."/>
            <person name="Yen J."/>
            <person name="Zhang J."/>
            <person name="Zhou J."/>
            <person name="Zoghbi H."/>
            <person name="Zorilla S."/>
            <person name="Buck D."/>
            <person name="Reinhardt R."/>
            <person name="Poustka A."/>
            <person name="Rosenthal A."/>
            <person name="Lehrach H."/>
            <person name="Meindl A."/>
            <person name="Minx P.J."/>
            <person name="Hillier L.W."/>
            <person name="Willard H.F."/>
            <person name="Wilson R.K."/>
            <person name="Waterston R.H."/>
            <person name="Rice C.M."/>
            <person name="Vaudin M."/>
            <person name="Coulson A."/>
            <person name="Nelson D.L."/>
            <person name="Weinstock G."/>
            <person name="Sulston J.E."/>
            <person name="Durbin R.M."/>
            <person name="Hubbard T."/>
            <person name="Gibbs R.A."/>
            <person name="Beck S."/>
            <person name="Rogers J."/>
            <person name="Bentley D.R."/>
        </authorList>
    </citation>
    <scope>NUCLEOTIDE SEQUENCE [LARGE SCALE GENOMIC DNA]</scope>
</reference>
<reference key="4">
    <citation type="journal article" date="2004" name="Genome Res.">
        <title>The status, quality, and expansion of the NIH full-length cDNA project: the Mammalian Gene Collection (MGC).</title>
        <authorList>
            <consortium name="The MGC Project Team"/>
        </authorList>
    </citation>
    <scope>NUCLEOTIDE SEQUENCE [LARGE SCALE MRNA]</scope>
</reference>